<reference key="1">
    <citation type="journal article" date="2006" name="Lancet">
        <title>Complete genome sequence of USA300, an epidemic clone of community-acquired meticillin-resistant Staphylococcus aureus.</title>
        <authorList>
            <person name="Diep B.A."/>
            <person name="Gill S.R."/>
            <person name="Chang R.F."/>
            <person name="Phan T.H."/>
            <person name="Chen J.H."/>
            <person name="Davidson M.G."/>
            <person name="Lin F."/>
            <person name="Lin J."/>
            <person name="Carleton H.A."/>
            <person name="Mongodin E.F."/>
            <person name="Sensabaugh G.F."/>
            <person name="Perdreau-Remington F."/>
        </authorList>
    </citation>
    <scope>NUCLEOTIDE SEQUENCE [LARGE SCALE GENOMIC DNA]</scope>
    <source>
        <strain>USA300</strain>
    </source>
</reference>
<comment type="function">
    <text evidence="1">Catalyzes the last two sequential reactions in the de novo biosynthetic pathway for UDP-N-acetylglucosamine (UDP-GlcNAc). The C-terminal domain catalyzes the transfer of acetyl group from acetyl coenzyme A to glucosamine-1-phosphate (GlcN-1-P) to produce N-acetylglucosamine-1-phosphate (GlcNAc-1-P), which is converted into UDP-GlcNAc by the transfer of uridine 5-monophosphate (from uridine 5-triphosphate), a reaction catalyzed by the N-terminal domain.</text>
</comment>
<comment type="catalytic activity">
    <reaction evidence="1">
        <text>alpha-D-glucosamine 1-phosphate + acetyl-CoA = N-acetyl-alpha-D-glucosamine 1-phosphate + CoA + H(+)</text>
        <dbReference type="Rhea" id="RHEA:13725"/>
        <dbReference type="ChEBI" id="CHEBI:15378"/>
        <dbReference type="ChEBI" id="CHEBI:57287"/>
        <dbReference type="ChEBI" id="CHEBI:57288"/>
        <dbReference type="ChEBI" id="CHEBI:57776"/>
        <dbReference type="ChEBI" id="CHEBI:58516"/>
        <dbReference type="EC" id="2.3.1.157"/>
    </reaction>
</comment>
<comment type="catalytic activity">
    <reaction evidence="1">
        <text>N-acetyl-alpha-D-glucosamine 1-phosphate + UTP + H(+) = UDP-N-acetyl-alpha-D-glucosamine + diphosphate</text>
        <dbReference type="Rhea" id="RHEA:13509"/>
        <dbReference type="ChEBI" id="CHEBI:15378"/>
        <dbReference type="ChEBI" id="CHEBI:33019"/>
        <dbReference type="ChEBI" id="CHEBI:46398"/>
        <dbReference type="ChEBI" id="CHEBI:57705"/>
        <dbReference type="ChEBI" id="CHEBI:57776"/>
        <dbReference type="EC" id="2.7.7.23"/>
    </reaction>
</comment>
<comment type="cofactor">
    <cofactor evidence="1">
        <name>Mg(2+)</name>
        <dbReference type="ChEBI" id="CHEBI:18420"/>
    </cofactor>
    <text evidence="1">Binds 1 Mg(2+) ion per subunit.</text>
</comment>
<comment type="pathway">
    <text evidence="1">Nucleotide-sugar biosynthesis; UDP-N-acetyl-alpha-D-glucosamine biosynthesis; N-acetyl-alpha-D-glucosamine 1-phosphate from alpha-D-glucosamine 6-phosphate (route II): step 2/2.</text>
</comment>
<comment type="pathway">
    <text evidence="1">Nucleotide-sugar biosynthesis; UDP-N-acetyl-alpha-D-glucosamine biosynthesis; UDP-N-acetyl-alpha-D-glucosamine from N-acetyl-alpha-D-glucosamine 1-phosphate: step 1/1.</text>
</comment>
<comment type="pathway">
    <text evidence="1">Bacterial outer membrane biogenesis; LPS lipid A biosynthesis.</text>
</comment>
<comment type="subunit">
    <text evidence="1">Homotrimer.</text>
</comment>
<comment type="subcellular location">
    <subcellularLocation>
        <location evidence="1">Cytoplasm</location>
    </subcellularLocation>
</comment>
<comment type="similarity">
    <text evidence="1">In the N-terminal section; belongs to the N-acetylglucosamine-1-phosphate uridyltransferase family.</text>
</comment>
<comment type="similarity">
    <text evidence="1">In the C-terminal section; belongs to the transferase hexapeptide repeat family.</text>
</comment>
<protein>
    <recommendedName>
        <fullName evidence="1">Bifunctional protein GlmU</fullName>
    </recommendedName>
    <domain>
        <recommendedName>
            <fullName evidence="1">UDP-N-acetylglucosamine pyrophosphorylase</fullName>
            <ecNumber evidence="1">2.7.7.23</ecNumber>
        </recommendedName>
        <alternativeName>
            <fullName evidence="1">N-acetylglucosamine-1-phosphate uridyltransferase</fullName>
        </alternativeName>
    </domain>
    <domain>
        <recommendedName>
            <fullName evidence="1">Glucosamine-1-phosphate N-acetyltransferase</fullName>
            <ecNumber evidence="1">2.3.1.157</ecNumber>
        </recommendedName>
    </domain>
</protein>
<sequence length="450" mass="48533">MRRHAIILAAGKGTRMKSKKYKVLHEVAGKPMVEHVLESVKGSGVDQVVTIVGHGAESVKGHLGERSLYSFQEEQLGTAHAVQMAKSHLEDKEGTTIVVCGDTPLITKETLETLIAHHEDANAQATVLSASIQQPYGYGRIVRNASGRLERIVEEKDATQAEKDINEISSGIFAFNNKTLFEKLTQVKNDNAQGEYYLPDVLSLILNDGGIVEVYRTNDVEEIMGVNDRVMLSQAEKAMQRRTNHYHMLNGVTIIDPDSTYIGPDVTIGSDTVIEPGVRINGRTEIGEDVVIGQYSEINNSTIENGACIQQSVVNDASVGANTKVGPFAQLRPGAQLGADVKVGNFVEIKKADLKDGAKVSHLSYIGDAVIGERTNIGCGTITVNYDGENKFKTIVGKDSFVGCNVNLVAPVTIGDDVLVAAGSTITDDVPNDSLAVARARQTTKEGYRK</sequence>
<feature type="chain" id="PRO_0000244311" description="Bifunctional protein GlmU">
    <location>
        <begin position="1"/>
        <end position="450"/>
    </location>
</feature>
<feature type="region of interest" description="Pyrophosphorylase" evidence="1">
    <location>
        <begin position="1"/>
        <end position="229"/>
    </location>
</feature>
<feature type="region of interest" description="Linker" evidence="1">
    <location>
        <begin position="230"/>
        <end position="250"/>
    </location>
</feature>
<feature type="region of interest" description="N-acetyltransferase" evidence="1">
    <location>
        <begin position="251"/>
        <end position="450"/>
    </location>
</feature>
<feature type="active site" description="Proton acceptor" evidence="1">
    <location>
        <position position="362"/>
    </location>
</feature>
<feature type="binding site" evidence="1">
    <location>
        <begin position="8"/>
        <end position="11"/>
    </location>
    <ligand>
        <name>UDP-N-acetyl-alpha-D-glucosamine</name>
        <dbReference type="ChEBI" id="CHEBI:57705"/>
    </ligand>
</feature>
<feature type="binding site" evidence="1">
    <location>
        <position position="22"/>
    </location>
    <ligand>
        <name>UDP-N-acetyl-alpha-D-glucosamine</name>
        <dbReference type="ChEBI" id="CHEBI:57705"/>
    </ligand>
</feature>
<feature type="binding site" evidence="1">
    <location>
        <position position="72"/>
    </location>
    <ligand>
        <name>UDP-N-acetyl-alpha-D-glucosamine</name>
        <dbReference type="ChEBI" id="CHEBI:57705"/>
    </ligand>
</feature>
<feature type="binding site" evidence="1">
    <location>
        <begin position="77"/>
        <end position="78"/>
    </location>
    <ligand>
        <name>UDP-N-acetyl-alpha-D-glucosamine</name>
        <dbReference type="ChEBI" id="CHEBI:57705"/>
    </ligand>
</feature>
<feature type="binding site" evidence="1">
    <location>
        <position position="102"/>
    </location>
    <ligand>
        <name>Mg(2+)</name>
        <dbReference type="ChEBI" id="CHEBI:18420"/>
    </ligand>
</feature>
<feature type="binding site" evidence="1">
    <location>
        <position position="139"/>
    </location>
    <ligand>
        <name>UDP-N-acetyl-alpha-D-glucosamine</name>
        <dbReference type="ChEBI" id="CHEBI:57705"/>
    </ligand>
</feature>
<feature type="binding site" evidence="1">
    <location>
        <position position="154"/>
    </location>
    <ligand>
        <name>UDP-N-acetyl-alpha-D-glucosamine</name>
        <dbReference type="ChEBI" id="CHEBI:57705"/>
    </ligand>
</feature>
<feature type="binding site" evidence="1">
    <location>
        <position position="227"/>
    </location>
    <ligand>
        <name>Mg(2+)</name>
        <dbReference type="ChEBI" id="CHEBI:18420"/>
    </ligand>
</feature>
<feature type="binding site" evidence="1">
    <location>
        <position position="227"/>
    </location>
    <ligand>
        <name>UDP-N-acetyl-alpha-D-glucosamine</name>
        <dbReference type="ChEBI" id="CHEBI:57705"/>
    </ligand>
</feature>
<feature type="binding site" evidence="1">
    <location>
        <position position="332"/>
    </location>
    <ligand>
        <name>UDP-N-acetyl-alpha-D-glucosamine</name>
        <dbReference type="ChEBI" id="CHEBI:57705"/>
    </ligand>
</feature>
<feature type="binding site" evidence="1">
    <location>
        <position position="350"/>
    </location>
    <ligand>
        <name>UDP-N-acetyl-alpha-D-glucosamine</name>
        <dbReference type="ChEBI" id="CHEBI:57705"/>
    </ligand>
</feature>
<feature type="binding site" evidence="1">
    <location>
        <position position="365"/>
    </location>
    <ligand>
        <name>UDP-N-acetyl-alpha-D-glucosamine</name>
        <dbReference type="ChEBI" id="CHEBI:57705"/>
    </ligand>
</feature>
<feature type="binding site" evidence="1">
    <location>
        <position position="376"/>
    </location>
    <ligand>
        <name>UDP-N-acetyl-alpha-D-glucosamine</name>
        <dbReference type="ChEBI" id="CHEBI:57705"/>
    </ligand>
</feature>
<feature type="binding site" evidence="1">
    <location>
        <begin position="385"/>
        <end position="386"/>
    </location>
    <ligand>
        <name>acetyl-CoA</name>
        <dbReference type="ChEBI" id="CHEBI:57288"/>
    </ligand>
</feature>
<feature type="binding site" evidence="1">
    <location>
        <position position="422"/>
    </location>
    <ligand>
        <name>acetyl-CoA</name>
        <dbReference type="ChEBI" id="CHEBI:57288"/>
    </ligand>
</feature>
<feature type="binding site" evidence="1">
    <location>
        <position position="439"/>
    </location>
    <ligand>
        <name>acetyl-CoA</name>
        <dbReference type="ChEBI" id="CHEBI:57288"/>
    </ligand>
</feature>
<evidence type="ECO:0000255" key="1">
    <source>
        <dbReference type="HAMAP-Rule" id="MF_01631"/>
    </source>
</evidence>
<dbReference type="EC" id="2.7.7.23" evidence="1"/>
<dbReference type="EC" id="2.3.1.157" evidence="1"/>
<dbReference type="EMBL" id="CP000255">
    <property type="protein sequence ID" value="ABD21587.1"/>
    <property type="molecule type" value="Genomic_DNA"/>
</dbReference>
<dbReference type="RefSeq" id="WP_001252529.1">
    <property type="nucleotide sequence ID" value="NZ_CP027476.1"/>
</dbReference>
<dbReference type="SMR" id="Q2FJE2"/>
<dbReference type="KEGG" id="saa:SAUSA300_0477"/>
<dbReference type="HOGENOM" id="CLU_029499_15_2_9"/>
<dbReference type="UniPathway" id="UPA00113">
    <property type="reaction ID" value="UER00532"/>
</dbReference>
<dbReference type="UniPathway" id="UPA00113">
    <property type="reaction ID" value="UER00533"/>
</dbReference>
<dbReference type="UniPathway" id="UPA00973"/>
<dbReference type="Proteomes" id="UP000001939">
    <property type="component" value="Chromosome"/>
</dbReference>
<dbReference type="GO" id="GO:0005737">
    <property type="term" value="C:cytoplasm"/>
    <property type="evidence" value="ECO:0007669"/>
    <property type="project" value="UniProtKB-SubCell"/>
</dbReference>
<dbReference type="GO" id="GO:0016020">
    <property type="term" value="C:membrane"/>
    <property type="evidence" value="ECO:0007669"/>
    <property type="project" value="GOC"/>
</dbReference>
<dbReference type="GO" id="GO:0019134">
    <property type="term" value="F:glucosamine-1-phosphate N-acetyltransferase activity"/>
    <property type="evidence" value="ECO:0007669"/>
    <property type="project" value="UniProtKB-UniRule"/>
</dbReference>
<dbReference type="GO" id="GO:0000287">
    <property type="term" value="F:magnesium ion binding"/>
    <property type="evidence" value="ECO:0007669"/>
    <property type="project" value="UniProtKB-UniRule"/>
</dbReference>
<dbReference type="GO" id="GO:0003977">
    <property type="term" value="F:UDP-N-acetylglucosamine diphosphorylase activity"/>
    <property type="evidence" value="ECO:0007669"/>
    <property type="project" value="UniProtKB-UniRule"/>
</dbReference>
<dbReference type="GO" id="GO:0000902">
    <property type="term" value="P:cell morphogenesis"/>
    <property type="evidence" value="ECO:0007669"/>
    <property type="project" value="UniProtKB-UniRule"/>
</dbReference>
<dbReference type="GO" id="GO:0071555">
    <property type="term" value="P:cell wall organization"/>
    <property type="evidence" value="ECO:0007669"/>
    <property type="project" value="UniProtKB-KW"/>
</dbReference>
<dbReference type="GO" id="GO:0009245">
    <property type="term" value="P:lipid A biosynthetic process"/>
    <property type="evidence" value="ECO:0007669"/>
    <property type="project" value="UniProtKB-UniRule"/>
</dbReference>
<dbReference type="GO" id="GO:0009252">
    <property type="term" value="P:peptidoglycan biosynthetic process"/>
    <property type="evidence" value="ECO:0007669"/>
    <property type="project" value="UniProtKB-UniRule"/>
</dbReference>
<dbReference type="GO" id="GO:0008360">
    <property type="term" value="P:regulation of cell shape"/>
    <property type="evidence" value="ECO:0007669"/>
    <property type="project" value="UniProtKB-KW"/>
</dbReference>
<dbReference type="GO" id="GO:0006048">
    <property type="term" value="P:UDP-N-acetylglucosamine biosynthetic process"/>
    <property type="evidence" value="ECO:0007669"/>
    <property type="project" value="UniProtKB-UniPathway"/>
</dbReference>
<dbReference type="CDD" id="cd02540">
    <property type="entry name" value="GT2_GlmU_N_bac"/>
    <property type="match status" value="1"/>
</dbReference>
<dbReference type="CDD" id="cd03353">
    <property type="entry name" value="LbH_GlmU_C"/>
    <property type="match status" value="1"/>
</dbReference>
<dbReference type="Gene3D" id="2.160.10.10">
    <property type="entry name" value="Hexapeptide repeat proteins"/>
    <property type="match status" value="1"/>
</dbReference>
<dbReference type="Gene3D" id="3.90.550.10">
    <property type="entry name" value="Spore Coat Polysaccharide Biosynthesis Protein SpsA, Chain A"/>
    <property type="match status" value="1"/>
</dbReference>
<dbReference type="HAMAP" id="MF_01631">
    <property type="entry name" value="GlmU"/>
    <property type="match status" value="1"/>
</dbReference>
<dbReference type="InterPro" id="IPR005882">
    <property type="entry name" value="Bifunctional_GlmU"/>
</dbReference>
<dbReference type="InterPro" id="IPR050065">
    <property type="entry name" value="GlmU-like"/>
</dbReference>
<dbReference type="InterPro" id="IPR038009">
    <property type="entry name" value="GlmU_C_LbH"/>
</dbReference>
<dbReference type="InterPro" id="IPR001451">
    <property type="entry name" value="Hexapep"/>
</dbReference>
<dbReference type="InterPro" id="IPR018357">
    <property type="entry name" value="Hexapep_transf_CS"/>
</dbReference>
<dbReference type="InterPro" id="IPR005835">
    <property type="entry name" value="NTP_transferase_dom"/>
</dbReference>
<dbReference type="InterPro" id="IPR029044">
    <property type="entry name" value="Nucleotide-diphossugar_trans"/>
</dbReference>
<dbReference type="InterPro" id="IPR011004">
    <property type="entry name" value="Trimer_LpxA-like_sf"/>
</dbReference>
<dbReference type="NCBIfam" id="TIGR01173">
    <property type="entry name" value="glmU"/>
    <property type="match status" value="1"/>
</dbReference>
<dbReference type="NCBIfam" id="NF010934">
    <property type="entry name" value="PRK14354.1"/>
    <property type="match status" value="1"/>
</dbReference>
<dbReference type="PANTHER" id="PTHR43584:SF3">
    <property type="entry name" value="BIFUNCTIONAL PROTEIN GLMU"/>
    <property type="match status" value="1"/>
</dbReference>
<dbReference type="PANTHER" id="PTHR43584">
    <property type="entry name" value="NUCLEOTIDYL TRANSFERASE"/>
    <property type="match status" value="1"/>
</dbReference>
<dbReference type="Pfam" id="PF00132">
    <property type="entry name" value="Hexapep"/>
    <property type="match status" value="2"/>
</dbReference>
<dbReference type="Pfam" id="PF00483">
    <property type="entry name" value="NTP_transferase"/>
    <property type="match status" value="1"/>
</dbReference>
<dbReference type="SUPFAM" id="SSF53448">
    <property type="entry name" value="Nucleotide-diphospho-sugar transferases"/>
    <property type="match status" value="1"/>
</dbReference>
<dbReference type="SUPFAM" id="SSF51161">
    <property type="entry name" value="Trimeric LpxA-like enzymes"/>
    <property type="match status" value="1"/>
</dbReference>
<dbReference type="PROSITE" id="PS00101">
    <property type="entry name" value="HEXAPEP_TRANSFERASES"/>
    <property type="match status" value="1"/>
</dbReference>
<gene>
    <name evidence="1" type="primary">glmU</name>
    <name type="ordered locus">SAUSA300_0477</name>
</gene>
<proteinExistence type="inferred from homology"/>
<keyword id="KW-0012">Acyltransferase</keyword>
<keyword id="KW-0133">Cell shape</keyword>
<keyword id="KW-0961">Cell wall biogenesis/degradation</keyword>
<keyword id="KW-0963">Cytoplasm</keyword>
<keyword id="KW-0460">Magnesium</keyword>
<keyword id="KW-0479">Metal-binding</keyword>
<keyword id="KW-0511">Multifunctional enzyme</keyword>
<keyword id="KW-0548">Nucleotidyltransferase</keyword>
<keyword id="KW-0573">Peptidoglycan synthesis</keyword>
<keyword id="KW-0677">Repeat</keyword>
<keyword id="KW-0808">Transferase</keyword>
<organism>
    <name type="scientific">Staphylococcus aureus (strain USA300)</name>
    <dbReference type="NCBI Taxonomy" id="367830"/>
    <lineage>
        <taxon>Bacteria</taxon>
        <taxon>Bacillati</taxon>
        <taxon>Bacillota</taxon>
        <taxon>Bacilli</taxon>
        <taxon>Bacillales</taxon>
        <taxon>Staphylococcaceae</taxon>
        <taxon>Staphylococcus</taxon>
    </lineage>
</organism>
<accession>Q2FJE2</accession>
<name>GLMU_STAA3</name>